<feature type="chain" id="PRO_0000268653" description="Sigma non-opioid intracellular receptor 1">
    <location>
        <begin position="1"/>
        <end position="223"/>
    </location>
</feature>
<feature type="topological domain" description="Lumenal" evidence="3">
    <location>
        <begin position="1"/>
        <end position="9"/>
    </location>
</feature>
<feature type="transmembrane region" description="Helical" evidence="3">
    <location>
        <begin position="10"/>
        <end position="30"/>
    </location>
</feature>
<feature type="topological domain" description="Cytoplasmic" evidence="3">
    <location>
        <begin position="31"/>
        <end position="223"/>
    </location>
</feature>
<feature type="region of interest" description="Targeting to endoplasmic reticulum-associated lipid droplets" evidence="9">
    <location>
        <begin position="2"/>
        <end position="8"/>
    </location>
</feature>
<feature type="region of interest" description="Important for ligand-binding" evidence="2">
    <location>
        <begin position="99"/>
        <end position="106"/>
    </location>
</feature>
<feature type="region of interest" description="C-terminal hydrophobic region" evidence="20">
    <location>
        <begin position="177"/>
        <end position="223"/>
    </location>
</feature>
<feature type="site" description="Important for ligand binding" evidence="3">
    <location>
        <position position="126"/>
    </location>
</feature>
<feature type="site" description="Important for ligand binding" evidence="3">
    <location>
        <position position="172"/>
    </location>
</feature>
<feature type="splice variant" id="VSP_021987" description="In isoform 2." evidence="19">
    <location>
        <begin position="118"/>
        <end position="148"/>
    </location>
</feature>
<feature type="sequence conflict" description="In Ref. 3; AAF64281." evidence="20" ref="3">
    <original>S</original>
    <variation>G</variation>
    <location>
        <position position="192"/>
    </location>
</feature>
<proteinExistence type="evidence at protein level"/>
<dbReference type="EMBL" id="AF030198">
    <property type="protein sequence ID" value="AAC39951.1"/>
    <property type="molecule type" value="mRNA"/>
</dbReference>
<dbReference type="EMBL" id="AF030199">
    <property type="protein sequence ID" value="AAB97683.1"/>
    <property type="molecule type" value="Genomic_DNA"/>
</dbReference>
<dbReference type="EMBL" id="AF004927">
    <property type="protein sequence ID" value="AAC33306.1"/>
    <property type="molecule type" value="mRNA"/>
</dbReference>
<dbReference type="EMBL" id="AF226605">
    <property type="protein sequence ID" value="AAF64281.1"/>
    <property type="molecule type" value="mRNA"/>
</dbReference>
<dbReference type="EMBL" id="AK154300">
    <property type="protein sequence ID" value="BAE32499.1"/>
    <property type="molecule type" value="mRNA"/>
</dbReference>
<dbReference type="EMBL" id="AK159886">
    <property type="protein sequence ID" value="BAE35455.1"/>
    <property type="molecule type" value="mRNA"/>
</dbReference>
<dbReference type="EMBL" id="BC002000">
    <property type="protein sequence ID" value="AAH02000.1"/>
    <property type="molecule type" value="mRNA"/>
</dbReference>
<dbReference type="EMBL" id="BC019930">
    <property type="protein sequence ID" value="AAH19930.1"/>
    <property type="molecule type" value="mRNA"/>
</dbReference>
<dbReference type="CCDS" id="CCDS18070.1">
    <molecule id="O55242-1"/>
</dbReference>
<dbReference type="CCDS" id="CCDS71362.1">
    <molecule id="O55242-2"/>
</dbReference>
<dbReference type="PIR" id="JC5815">
    <property type="entry name" value="JC5815"/>
</dbReference>
<dbReference type="RefSeq" id="NP_001273467.1">
    <property type="nucleotide sequence ID" value="NM_001286538.1"/>
</dbReference>
<dbReference type="RefSeq" id="NP_001273468.1">
    <molecule id="O55242-2"/>
    <property type="nucleotide sequence ID" value="NM_001286539.1"/>
</dbReference>
<dbReference type="RefSeq" id="NP_001273469.1">
    <property type="nucleotide sequence ID" value="NM_001286540.1"/>
</dbReference>
<dbReference type="RefSeq" id="NP_001273470.1">
    <property type="nucleotide sequence ID" value="NM_001286541.1"/>
</dbReference>
<dbReference type="RefSeq" id="NP_001273480.1">
    <property type="nucleotide sequence ID" value="NM_001286551.1"/>
</dbReference>
<dbReference type="RefSeq" id="NP_035144.1">
    <molecule id="O55242-1"/>
    <property type="nucleotide sequence ID" value="NM_011014.3"/>
</dbReference>
<dbReference type="RefSeq" id="XP_017175516.1">
    <property type="nucleotide sequence ID" value="XM_017320027.1"/>
</dbReference>
<dbReference type="SMR" id="O55242"/>
<dbReference type="BioGRID" id="201973">
    <property type="interactions" value="6"/>
</dbReference>
<dbReference type="FunCoup" id="O55242">
    <property type="interactions" value="576"/>
</dbReference>
<dbReference type="IntAct" id="O55242">
    <property type="interactions" value="3"/>
</dbReference>
<dbReference type="STRING" id="10090.ENSMUSP00000056027"/>
<dbReference type="BindingDB" id="O55242"/>
<dbReference type="ChEMBL" id="CHEMBL3465"/>
<dbReference type="DrugCentral" id="O55242"/>
<dbReference type="GuidetoPHARMACOLOGY" id="2552"/>
<dbReference type="PhosphoSitePlus" id="O55242"/>
<dbReference type="jPOST" id="O55242"/>
<dbReference type="PaxDb" id="10090-ENSMUSP00000056027"/>
<dbReference type="PeptideAtlas" id="O55242"/>
<dbReference type="ProteomicsDB" id="261337">
    <molecule id="O55242-1"/>
</dbReference>
<dbReference type="ProteomicsDB" id="261338">
    <molecule id="O55242-2"/>
</dbReference>
<dbReference type="Pumba" id="O55242"/>
<dbReference type="Antibodypedia" id="2756">
    <property type="antibodies" value="244 antibodies from 35 providers"/>
</dbReference>
<dbReference type="DNASU" id="18391"/>
<dbReference type="Ensembl" id="ENSMUST00000059354.15">
    <molecule id="O55242-1"/>
    <property type="protein sequence ID" value="ENSMUSP00000056027.8"/>
    <property type="gene ID" value="ENSMUSG00000036078.17"/>
</dbReference>
<dbReference type="Ensembl" id="ENSMUST00000071561.7">
    <molecule id="O55242-2"/>
    <property type="protein sequence ID" value="ENSMUSP00000071492.7"/>
    <property type="gene ID" value="ENSMUSG00000036078.17"/>
</dbReference>
<dbReference type="GeneID" id="18391"/>
<dbReference type="KEGG" id="mmu:18391"/>
<dbReference type="UCSC" id="uc008sjk.2">
    <molecule id="O55242-1"/>
    <property type="organism name" value="mouse"/>
</dbReference>
<dbReference type="AGR" id="MGI:1195268"/>
<dbReference type="CTD" id="10280"/>
<dbReference type="MGI" id="MGI:1195268">
    <property type="gene designation" value="Sigmar1"/>
</dbReference>
<dbReference type="VEuPathDB" id="HostDB:ENSMUSG00000036078"/>
<dbReference type="eggNOG" id="KOG4143">
    <property type="taxonomic scope" value="Eukaryota"/>
</dbReference>
<dbReference type="GeneTree" id="ENSGT00390000012082"/>
<dbReference type="HOGENOM" id="CLU_085469_0_0_1"/>
<dbReference type="InParanoid" id="O55242"/>
<dbReference type="OMA" id="AMYVIHA"/>
<dbReference type="OrthoDB" id="347124at2759"/>
<dbReference type="PhylomeDB" id="O55242"/>
<dbReference type="TreeFam" id="TF300106"/>
<dbReference type="BioGRID-ORCS" id="18391">
    <property type="hits" value="5 hits in 79 CRISPR screens"/>
</dbReference>
<dbReference type="ChiTaRS" id="Sigmar1">
    <property type="organism name" value="mouse"/>
</dbReference>
<dbReference type="PRO" id="PR:O55242"/>
<dbReference type="Proteomes" id="UP000000589">
    <property type="component" value="Chromosome 4"/>
</dbReference>
<dbReference type="RNAct" id="O55242">
    <property type="molecule type" value="protein"/>
</dbReference>
<dbReference type="Bgee" id="ENSMUSG00000036078">
    <property type="expression patterns" value="Expressed in left lobe of liver and 241 other cell types or tissues"/>
</dbReference>
<dbReference type="ExpressionAtlas" id="O55242">
    <property type="expression patterns" value="baseline and differential"/>
</dbReference>
<dbReference type="GO" id="GO:0070161">
    <property type="term" value="C:anchoring junction"/>
    <property type="evidence" value="ECO:0007669"/>
    <property type="project" value="UniProtKB-SubCell"/>
</dbReference>
<dbReference type="GO" id="GO:0031410">
    <property type="term" value="C:cytoplasmic vesicle"/>
    <property type="evidence" value="ECO:0007669"/>
    <property type="project" value="UniProtKB-KW"/>
</dbReference>
<dbReference type="GO" id="GO:0005789">
    <property type="term" value="C:endoplasmic reticulum membrane"/>
    <property type="evidence" value="ECO:0007669"/>
    <property type="project" value="UniProtKB-SubCell"/>
</dbReference>
<dbReference type="GO" id="GO:0098978">
    <property type="term" value="C:glutamatergic synapse"/>
    <property type="evidence" value="ECO:0007669"/>
    <property type="project" value="Ensembl"/>
</dbReference>
<dbReference type="GO" id="GO:0030426">
    <property type="term" value="C:growth cone"/>
    <property type="evidence" value="ECO:0007669"/>
    <property type="project" value="UniProtKB-SubCell"/>
</dbReference>
<dbReference type="GO" id="GO:0005811">
    <property type="term" value="C:lipid droplet"/>
    <property type="evidence" value="ECO:0007669"/>
    <property type="project" value="UniProtKB-SubCell"/>
</dbReference>
<dbReference type="GO" id="GO:0016020">
    <property type="term" value="C:membrane"/>
    <property type="evidence" value="ECO:0000250"/>
    <property type="project" value="UniProtKB"/>
</dbReference>
<dbReference type="GO" id="GO:0005637">
    <property type="term" value="C:nuclear inner membrane"/>
    <property type="evidence" value="ECO:0007669"/>
    <property type="project" value="UniProtKB-SubCell"/>
</dbReference>
<dbReference type="GO" id="GO:0005640">
    <property type="term" value="C:nuclear outer membrane"/>
    <property type="evidence" value="ECO:0007669"/>
    <property type="project" value="UniProtKB-SubCell"/>
</dbReference>
<dbReference type="GO" id="GO:0098794">
    <property type="term" value="C:postsynapse"/>
    <property type="evidence" value="ECO:0000314"/>
    <property type="project" value="SynGO"/>
</dbReference>
<dbReference type="GO" id="GO:0014069">
    <property type="term" value="C:postsynaptic density"/>
    <property type="evidence" value="ECO:0000314"/>
    <property type="project" value="UniProtKB"/>
</dbReference>
<dbReference type="GO" id="GO:0098839">
    <property type="term" value="C:postsynaptic density membrane"/>
    <property type="evidence" value="ECO:0007669"/>
    <property type="project" value="UniProtKB-SubCell"/>
</dbReference>
<dbReference type="GO" id="GO:0004985">
    <property type="term" value="F:G protein-coupled opioid receptor activity"/>
    <property type="evidence" value="ECO:0000314"/>
    <property type="project" value="MGI"/>
</dbReference>
<dbReference type="GO" id="GO:0031852">
    <property type="term" value="F:mu-type opioid receptor binding"/>
    <property type="evidence" value="ECO:0000314"/>
    <property type="project" value="MGI"/>
</dbReference>
<dbReference type="GO" id="GO:0038023">
    <property type="term" value="F:signaling receptor activity"/>
    <property type="evidence" value="ECO:0000314"/>
    <property type="project" value="MGI"/>
</dbReference>
<dbReference type="GO" id="GO:0006869">
    <property type="term" value="P:lipid transport"/>
    <property type="evidence" value="ECO:0007669"/>
    <property type="project" value="UniProtKB-KW"/>
</dbReference>
<dbReference type="GO" id="GO:0007399">
    <property type="term" value="P:nervous system development"/>
    <property type="evidence" value="ECO:0007669"/>
    <property type="project" value="Ensembl"/>
</dbReference>
<dbReference type="GO" id="GO:0070207">
    <property type="term" value="P:protein homotrimerization"/>
    <property type="evidence" value="ECO:0007669"/>
    <property type="project" value="Ensembl"/>
</dbReference>
<dbReference type="GO" id="GO:0043523">
    <property type="term" value="P:regulation of neuron apoptotic process"/>
    <property type="evidence" value="ECO:0000250"/>
    <property type="project" value="UniProtKB"/>
</dbReference>
<dbReference type="GO" id="GO:0150052">
    <property type="term" value="P:regulation of postsynapse assembly"/>
    <property type="evidence" value="ECO:0007669"/>
    <property type="project" value="Ensembl"/>
</dbReference>
<dbReference type="InterPro" id="IPR006716">
    <property type="entry name" value="ERG2_sigma1_rcpt-like"/>
</dbReference>
<dbReference type="PANTHER" id="PTHR10868">
    <property type="entry name" value="SIGMA 1-TYPE OPIOID RECEPTOR-RELATED"/>
    <property type="match status" value="1"/>
</dbReference>
<dbReference type="PANTHER" id="PTHR10868:SF1">
    <property type="entry name" value="SIGMA NON-OPIOID INTRACELLULAR RECEPTOR 1"/>
    <property type="match status" value="1"/>
</dbReference>
<dbReference type="Pfam" id="PF04622">
    <property type="entry name" value="ERG2_Sigma1R"/>
    <property type="match status" value="1"/>
</dbReference>
<sequence length="223" mass="25250">MPWAAGRRWAWITLILTIIAVLIQAAWLWLGTQNFVFSREEIAQLARQYAGLDHELAFSRLIVELRRLHPGHVLPDEELQWVFVNAGGWMGAMCILHASLSEYVLLFGTALGSHGHSGRYWAEISDTIISGTFHQWKEGTTKSEVFYPGETVVHGPGEATALEWGPNTWMVEYGRGVIPSTLFFALADTFFSTQDYLTLFYTLRAYARGLRLELTTYLFGQDS</sequence>
<accession>O55242</accession>
<accession>Q9JKU9</accession>
<name>SGMR1_MOUSE</name>
<reference key="1">
    <citation type="journal article" date="1997" name="Biochem. Biophys. Res. Commun.">
        <title>Cloning and structural analysis of the cDNA and the gene encoding the murine type 1 sigma receptor.</title>
        <authorList>
            <person name="Seth P."/>
            <person name="Leibach F.H."/>
            <person name="Ganapathy V."/>
        </authorList>
    </citation>
    <scope>NUCLEOTIDE SEQUENCE [GENOMIC DNA / MRNA] (ISOFORM 1)</scope>
    <scope>FUNCTION</scope>
    <source>
        <strain>129/Sv</strain>
        <strain>C57BL/6J</strain>
        <tissue>Kidney</tissue>
    </source>
</reference>
<reference key="2">
    <citation type="journal article" date="1998" name="J. Neurochem.">
        <title>Cloning and characterization of a mouse sigma1 receptor.</title>
        <authorList>
            <person name="Pan Y.-X."/>
            <person name="Mei J."/>
            <person name="Xu J."/>
            <person name="Wan B.-L."/>
            <person name="Zuckerman A."/>
            <person name="Pasternak G.W."/>
        </authorList>
    </citation>
    <scope>NUCLEOTIDE SEQUENCE [MRNA] (ISOFORM 1)</scope>
    <scope>FUNCTION</scope>
    <scope>TISSUE SPECIFICITY</scope>
    <source>
        <strain>C57BL/6J</strain>
        <tissue>Brain</tissue>
    </source>
</reference>
<reference key="3">
    <citation type="submission" date="2000-01" db="EMBL/GenBank/DDBJ databases">
        <authorList>
            <person name="Wang L.-M."/>
            <person name="Shelness G.S."/>
            <person name="Childers S.R."/>
            <person name="Mach R.H."/>
            <person name="Wheeler K.T."/>
        </authorList>
    </citation>
    <scope>NUCLEOTIDE SEQUENCE [MRNA] (ISOFORM 2)</scope>
    <source>
        <strain>C3H/HeJ</strain>
        <tissue>Mammary gland</tissue>
    </source>
</reference>
<reference key="4">
    <citation type="journal article" date="2005" name="Science">
        <title>The transcriptional landscape of the mammalian genome.</title>
        <authorList>
            <person name="Carninci P."/>
            <person name="Kasukawa T."/>
            <person name="Katayama S."/>
            <person name="Gough J."/>
            <person name="Frith M.C."/>
            <person name="Maeda N."/>
            <person name="Oyama R."/>
            <person name="Ravasi T."/>
            <person name="Lenhard B."/>
            <person name="Wells C."/>
            <person name="Kodzius R."/>
            <person name="Shimokawa K."/>
            <person name="Bajic V.B."/>
            <person name="Brenner S.E."/>
            <person name="Batalov S."/>
            <person name="Forrest A.R."/>
            <person name="Zavolan M."/>
            <person name="Davis M.J."/>
            <person name="Wilming L.G."/>
            <person name="Aidinis V."/>
            <person name="Allen J.E."/>
            <person name="Ambesi-Impiombato A."/>
            <person name="Apweiler R."/>
            <person name="Aturaliya R.N."/>
            <person name="Bailey T.L."/>
            <person name="Bansal M."/>
            <person name="Baxter L."/>
            <person name="Beisel K.W."/>
            <person name="Bersano T."/>
            <person name="Bono H."/>
            <person name="Chalk A.M."/>
            <person name="Chiu K.P."/>
            <person name="Choudhary V."/>
            <person name="Christoffels A."/>
            <person name="Clutterbuck D.R."/>
            <person name="Crowe M.L."/>
            <person name="Dalla E."/>
            <person name="Dalrymple B.P."/>
            <person name="de Bono B."/>
            <person name="Della Gatta G."/>
            <person name="di Bernardo D."/>
            <person name="Down T."/>
            <person name="Engstrom P."/>
            <person name="Fagiolini M."/>
            <person name="Faulkner G."/>
            <person name="Fletcher C.F."/>
            <person name="Fukushima T."/>
            <person name="Furuno M."/>
            <person name="Futaki S."/>
            <person name="Gariboldi M."/>
            <person name="Georgii-Hemming P."/>
            <person name="Gingeras T.R."/>
            <person name="Gojobori T."/>
            <person name="Green R.E."/>
            <person name="Gustincich S."/>
            <person name="Harbers M."/>
            <person name="Hayashi Y."/>
            <person name="Hensch T.K."/>
            <person name="Hirokawa N."/>
            <person name="Hill D."/>
            <person name="Huminiecki L."/>
            <person name="Iacono M."/>
            <person name="Ikeo K."/>
            <person name="Iwama A."/>
            <person name="Ishikawa T."/>
            <person name="Jakt M."/>
            <person name="Kanapin A."/>
            <person name="Katoh M."/>
            <person name="Kawasawa Y."/>
            <person name="Kelso J."/>
            <person name="Kitamura H."/>
            <person name="Kitano H."/>
            <person name="Kollias G."/>
            <person name="Krishnan S.P."/>
            <person name="Kruger A."/>
            <person name="Kummerfeld S.K."/>
            <person name="Kurochkin I.V."/>
            <person name="Lareau L.F."/>
            <person name="Lazarevic D."/>
            <person name="Lipovich L."/>
            <person name="Liu J."/>
            <person name="Liuni S."/>
            <person name="McWilliam S."/>
            <person name="Madan Babu M."/>
            <person name="Madera M."/>
            <person name="Marchionni L."/>
            <person name="Matsuda H."/>
            <person name="Matsuzawa S."/>
            <person name="Miki H."/>
            <person name="Mignone F."/>
            <person name="Miyake S."/>
            <person name="Morris K."/>
            <person name="Mottagui-Tabar S."/>
            <person name="Mulder N."/>
            <person name="Nakano N."/>
            <person name="Nakauchi H."/>
            <person name="Ng P."/>
            <person name="Nilsson R."/>
            <person name="Nishiguchi S."/>
            <person name="Nishikawa S."/>
            <person name="Nori F."/>
            <person name="Ohara O."/>
            <person name="Okazaki Y."/>
            <person name="Orlando V."/>
            <person name="Pang K.C."/>
            <person name="Pavan W.J."/>
            <person name="Pavesi G."/>
            <person name="Pesole G."/>
            <person name="Petrovsky N."/>
            <person name="Piazza S."/>
            <person name="Reed J."/>
            <person name="Reid J.F."/>
            <person name="Ring B.Z."/>
            <person name="Ringwald M."/>
            <person name="Rost B."/>
            <person name="Ruan Y."/>
            <person name="Salzberg S.L."/>
            <person name="Sandelin A."/>
            <person name="Schneider C."/>
            <person name="Schoenbach C."/>
            <person name="Sekiguchi K."/>
            <person name="Semple C.A."/>
            <person name="Seno S."/>
            <person name="Sessa L."/>
            <person name="Sheng Y."/>
            <person name="Shibata Y."/>
            <person name="Shimada H."/>
            <person name="Shimada K."/>
            <person name="Silva D."/>
            <person name="Sinclair B."/>
            <person name="Sperling S."/>
            <person name="Stupka E."/>
            <person name="Sugiura K."/>
            <person name="Sultana R."/>
            <person name="Takenaka Y."/>
            <person name="Taki K."/>
            <person name="Tammoja K."/>
            <person name="Tan S.L."/>
            <person name="Tang S."/>
            <person name="Taylor M.S."/>
            <person name="Tegner J."/>
            <person name="Teichmann S.A."/>
            <person name="Ueda H.R."/>
            <person name="van Nimwegen E."/>
            <person name="Verardo R."/>
            <person name="Wei C.L."/>
            <person name="Yagi K."/>
            <person name="Yamanishi H."/>
            <person name="Zabarovsky E."/>
            <person name="Zhu S."/>
            <person name="Zimmer A."/>
            <person name="Hide W."/>
            <person name="Bult C."/>
            <person name="Grimmond S.M."/>
            <person name="Teasdale R.D."/>
            <person name="Liu E.T."/>
            <person name="Brusic V."/>
            <person name="Quackenbush J."/>
            <person name="Wahlestedt C."/>
            <person name="Mattick J.S."/>
            <person name="Hume D.A."/>
            <person name="Kai C."/>
            <person name="Sasaki D."/>
            <person name="Tomaru Y."/>
            <person name="Fukuda S."/>
            <person name="Kanamori-Katayama M."/>
            <person name="Suzuki M."/>
            <person name="Aoki J."/>
            <person name="Arakawa T."/>
            <person name="Iida J."/>
            <person name="Imamura K."/>
            <person name="Itoh M."/>
            <person name="Kato T."/>
            <person name="Kawaji H."/>
            <person name="Kawagashira N."/>
            <person name="Kawashima T."/>
            <person name="Kojima M."/>
            <person name="Kondo S."/>
            <person name="Konno H."/>
            <person name="Nakano K."/>
            <person name="Ninomiya N."/>
            <person name="Nishio T."/>
            <person name="Okada M."/>
            <person name="Plessy C."/>
            <person name="Shibata K."/>
            <person name="Shiraki T."/>
            <person name="Suzuki S."/>
            <person name="Tagami M."/>
            <person name="Waki K."/>
            <person name="Watahiki A."/>
            <person name="Okamura-Oho Y."/>
            <person name="Suzuki H."/>
            <person name="Kawai J."/>
            <person name="Hayashizaki Y."/>
        </authorList>
    </citation>
    <scope>NUCLEOTIDE SEQUENCE [LARGE SCALE MRNA] (ISOFORM 1)</scope>
    <source>
        <strain>C57BL/6J</strain>
        <strain>NOD</strain>
        <tissue>Dendritic cell</tissue>
        <tissue>Osteoclast</tissue>
    </source>
</reference>
<reference key="5">
    <citation type="journal article" date="2004" name="Genome Res.">
        <title>The status, quality, and expansion of the NIH full-length cDNA project: the Mammalian Gene Collection (MGC).</title>
        <authorList>
            <consortium name="The MGC Project Team"/>
        </authorList>
    </citation>
    <scope>NUCLEOTIDE SEQUENCE [LARGE SCALE MRNA] (ISOFORM 1)</scope>
    <source>
        <strain>FVB/N</strain>
        <tissue>Liver</tissue>
        <tissue>Mammary tumor</tissue>
    </source>
</reference>
<reference key="6">
    <citation type="journal article" date="2000" name="J. Chem. Neuroanat.">
        <title>Expression of the purported sigma(1) (sigma(1)) receptor in the mammalian brain and its possible relevance in deficits induced by antagonism of the NMDA receptor complex as revealed using an antisense strategy.</title>
        <authorList>
            <person name="Kitaichi K."/>
            <person name="Chabot J.-G."/>
            <person name="Moebius F.F."/>
            <person name="Flandorfer A."/>
            <person name="Glossmann H."/>
            <person name="Quirion R."/>
        </authorList>
    </citation>
    <scope>TISSUE SPECIFICITY</scope>
</reference>
<reference key="7">
    <citation type="journal article" date="2001" name="Biochim. Biophys. Acta">
        <title>Expression pattern of the type 1 sigma receptor in the brain and identity of critical anionic amino acid residues in the ligand-binding domain of the receptor.</title>
        <authorList>
            <person name="Seth P."/>
            <person name="Ganapathy M.E."/>
            <person name="Conway S.J."/>
            <person name="Bridges C.D."/>
            <person name="Smith S.B."/>
            <person name="Casellas P."/>
            <person name="Ganapathy V."/>
        </authorList>
    </citation>
    <scope>TISSUE SPECIFICITY</scope>
</reference>
<reference key="8">
    <citation type="journal article" date="2001" name="Brain Res. Mol. Brain Res.">
        <title>Expression pattern of sigma receptor 1 mRNA and protein in mammalian retina.</title>
        <authorList>
            <person name="Ola M.S."/>
            <person name="Moore P."/>
            <person name="El-Sherbeny A."/>
            <person name="Roon P."/>
            <person name="Agarwal N."/>
            <person name="Sarthy V.P."/>
            <person name="Casellas P."/>
            <person name="Ganapathy V."/>
            <person name="Smith S.B."/>
        </authorList>
    </citation>
    <scope>TISSUE SPECIFICITY</scope>
</reference>
<reference key="9">
    <citation type="journal article" date="2001" name="Proc. Natl. Acad. Sci. U.S.A.">
        <title>Regulating ankyrin dynamics: roles of sigma-1 receptors.</title>
        <authorList>
            <person name="Hayashi T."/>
            <person name="Su T.-P."/>
        </authorList>
    </citation>
    <scope>FUNCTION</scope>
    <scope>INTERACTION WITH ANK2 AND ITPR3</scope>
    <scope>SUBCELLULAR LOCATION</scope>
</reference>
<reference key="10">
    <citation type="journal article" date="2003" name="Eur. J. Neurosci.">
        <title>Generation and phenotypic analysis of sigma receptor type I (sigma 1) knockout mice.</title>
        <authorList>
            <person name="Langa F."/>
            <person name="Codony X."/>
            <person name="Tovar V."/>
            <person name="Lavado A."/>
            <person name="Gimenez E."/>
            <person name="Cozar P."/>
            <person name="Cantero M."/>
            <person name="Dordal A."/>
            <person name="Hernandez E."/>
            <person name="Perez R."/>
            <person name="Monroy X."/>
            <person name="Zamanillo D."/>
            <person name="Guitart X."/>
            <person name="Montoliu L."/>
        </authorList>
    </citation>
    <scope>FUNCTION</scope>
    <scope>DISRUPTION PHENOTYPE</scope>
</reference>
<reference key="11">
    <citation type="journal article" date="2003" name="J. Pharmacol. Exp. Ther.">
        <title>Sigma-1 receptors (sigma(1) binding sites) form raft-like microdomains and target lipid droplets on the endoplasmic reticulum: roles in endoplasmic reticulum lipid compartmentalization and export.</title>
        <authorList>
            <person name="Hayashi T."/>
            <person name="Su T.-P."/>
        </authorList>
    </citation>
    <scope>FUNCTION</scope>
    <scope>SUBCELLULAR LOCATION</scope>
</reference>
<reference key="12">
    <citation type="journal article" date="2004" name="Brain Res.">
        <title>Involvement of kappa-opioid receptors and sigma receptors in memory function demonstrated using an antisense strategy.</title>
        <authorList>
            <person name="Hiramatsu M."/>
            <person name="Hoshino T."/>
        </authorList>
    </citation>
    <scope>FUNCTION</scope>
</reference>
<reference key="13">
    <citation type="journal article" date="2005" name="Eur. J. Pharmacol.">
        <title>Formalin-induced pain is reduced in sigma(1) receptor knockout mice.</title>
        <authorList>
            <person name="Cendan C.M."/>
            <person name="Pujalte J.M."/>
            <person name="Portillo-Salido E."/>
            <person name="Montoliu L."/>
            <person name="Baeyens J.M."/>
        </authorList>
    </citation>
    <scope>FUNCTION</scope>
</reference>
<reference key="14">
    <citation type="journal article" date="2010" name="Cell">
        <title>A tissue-specific atlas of mouse protein phosphorylation and expression.</title>
        <authorList>
            <person name="Huttlin E.L."/>
            <person name="Jedrychowski M.P."/>
            <person name="Elias J.E."/>
            <person name="Goswami T."/>
            <person name="Rad R."/>
            <person name="Beausoleil S.A."/>
            <person name="Villen J."/>
            <person name="Haas W."/>
            <person name="Sowa M.E."/>
            <person name="Gygi S.P."/>
        </authorList>
    </citation>
    <scope>IDENTIFICATION BY MASS SPECTROMETRY [LARGE SCALE ANALYSIS]</scope>
    <source>
        <tissue>Brain</tissue>
        <tissue>Brown adipose tissue</tissue>
        <tissue>Heart</tissue>
        <tissue>Kidney</tissue>
        <tissue>Liver</tissue>
        <tissue>Lung</tissue>
        <tissue>Pancreas</tissue>
        <tissue>Spleen</tissue>
        <tissue>Testis</tissue>
    </source>
</reference>
<reference key="15">
    <citation type="journal article" date="2010" name="Neuroscience">
        <title>The sigma-1 receptor is enriched in postsynaptic sites of C-terminals in mouse motoneurons. An anatomical and behavioral study.</title>
        <authorList>
            <person name="Mavlyutov T.A."/>
            <person name="Epstein M.L."/>
            <person name="Andersen K.A."/>
            <person name="Ziskind-Conhaim L."/>
            <person name="Ruoho A.E."/>
        </authorList>
    </citation>
    <scope>DISRUPTION PHENOTYPE</scope>
    <scope>TISSUE SPECIFICITY</scope>
    <scope>SUBCELLULAR LOCATION</scope>
</reference>
<reference key="16">
    <citation type="journal article" date="2013" name="Cell">
        <title>Dynamic interaction between sigma-1 receptor and Kv1.2 shapes neuronal and behavioral responses to cocaine.</title>
        <authorList>
            <person name="Kourrich S."/>
            <person name="Hayashi T."/>
            <person name="Chuang J.Y."/>
            <person name="Tsai S.Y."/>
            <person name="Su T.P."/>
            <person name="Bonci A."/>
        </authorList>
    </citation>
    <scope>INTERACTION WITH KCNA2</scope>
    <scope>FUNCTION</scope>
</reference>
<reference key="17">
    <citation type="journal article" date="2015" name="Brain">
        <title>Dysfunction in endoplasmic reticulum-mitochondria crosstalk underlies SIGMAR1 loss of function mediated motor neuron degeneration.</title>
        <authorList>
            <person name="Bernard-Marissal N."/>
            <person name="Medard J.J."/>
            <person name="Azzedine H."/>
            <person name="Chrast R."/>
        </authorList>
    </citation>
    <scope>FUNCTION</scope>
    <scope>DISRUPTION PHENOTYPE</scope>
</reference>
<reference key="18">
    <citation type="journal article" date="2016" name="Neuropharmacology">
        <title>The sigma-1 receptor-zinc finger protein 179 pathway protects against hydrogen peroxide-induced cell injury.</title>
        <authorList>
            <person name="Su T.C."/>
            <person name="Lin S.H."/>
            <person name="Lee P.T."/>
            <person name="Yeh S.H."/>
            <person name="Hsieh T.H."/>
            <person name="Chou S.Y."/>
            <person name="Su T.P."/>
            <person name="Hung J.J."/>
            <person name="Chang W.C."/>
            <person name="Lee Y.C."/>
            <person name="Chuang J.Y."/>
        </authorList>
    </citation>
    <scope>FUNCTION</scope>
    <scope>INTERACTION WITH RNF112</scope>
</reference>
<protein>
    <recommendedName>
        <fullName>Sigma non-opioid intracellular receptor 1</fullName>
    </recommendedName>
    <alternativeName>
        <fullName>Sigma 1-type opioid receptor</fullName>
        <shortName>Sigma1-receptor</shortName>
        <shortName>Sigma1R</shortName>
    </alternativeName>
</protein>
<keyword id="KW-0025">Alternative splicing</keyword>
<keyword id="KW-0965">Cell junction</keyword>
<keyword id="KW-1003">Cell membrane</keyword>
<keyword id="KW-0966">Cell projection</keyword>
<keyword id="KW-0968">Cytoplasmic vesicle</keyword>
<keyword id="KW-0256">Endoplasmic reticulum</keyword>
<keyword id="KW-0551">Lipid droplet</keyword>
<keyword id="KW-0445">Lipid transport</keyword>
<keyword id="KW-0472">Membrane</keyword>
<keyword id="KW-0539">Nucleus</keyword>
<keyword id="KW-0628">Postsynaptic cell membrane</keyword>
<keyword id="KW-0675">Receptor</keyword>
<keyword id="KW-1185">Reference proteome</keyword>
<keyword id="KW-0770">Synapse</keyword>
<keyword id="KW-0812">Transmembrane</keyword>
<keyword id="KW-1133">Transmembrane helix</keyword>
<keyword id="KW-0813">Transport</keyword>
<evidence type="ECO:0000250" key="1">
    <source>
        <dbReference type="UniProtKB" id="Q5BJF2"/>
    </source>
</evidence>
<evidence type="ECO:0000250" key="2">
    <source>
        <dbReference type="UniProtKB" id="Q60492"/>
    </source>
</evidence>
<evidence type="ECO:0000250" key="3">
    <source>
        <dbReference type="UniProtKB" id="Q99720"/>
    </source>
</evidence>
<evidence type="ECO:0000250" key="4">
    <source>
        <dbReference type="UniProtKB" id="Q9R0C9"/>
    </source>
</evidence>
<evidence type="ECO:0000269" key="5">
    <source>
    </source>
</evidence>
<evidence type="ECO:0000269" key="6">
    <source>
    </source>
</evidence>
<evidence type="ECO:0000269" key="7">
    <source>
    </source>
</evidence>
<evidence type="ECO:0000269" key="8">
    <source>
    </source>
</evidence>
<evidence type="ECO:0000269" key="9">
    <source>
    </source>
</evidence>
<evidence type="ECO:0000269" key="10">
    <source>
    </source>
</evidence>
<evidence type="ECO:0000269" key="11">
    <source>
    </source>
</evidence>
<evidence type="ECO:0000269" key="12">
    <source>
    </source>
</evidence>
<evidence type="ECO:0000269" key="13">
    <source>
    </source>
</evidence>
<evidence type="ECO:0000269" key="14">
    <source>
    </source>
</evidence>
<evidence type="ECO:0000269" key="15">
    <source>
    </source>
</evidence>
<evidence type="ECO:0000269" key="16">
    <source>
    </source>
</evidence>
<evidence type="ECO:0000269" key="17">
    <source>
    </source>
</evidence>
<evidence type="ECO:0000269" key="18">
    <source>
    </source>
</evidence>
<evidence type="ECO:0000303" key="19">
    <source ref="3"/>
</evidence>
<evidence type="ECO:0000305" key="20"/>
<gene>
    <name type="primary">Sigmar1</name>
    <name type="synonym">Oprs1</name>
</gene>
<organism>
    <name type="scientific">Mus musculus</name>
    <name type="common">Mouse</name>
    <dbReference type="NCBI Taxonomy" id="10090"/>
    <lineage>
        <taxon>Eukaryota</taxon>
        <taxon>Metazoa</taxon>
        <taxon>Chordata</taxon>
        <taxon>Craniata</taxon>
        <taxon>Vertebrata</taxon>
        <taxon>Euteleostomi</taxon>
        <taxon>Mammalia</taxon>
        <taxon>Eutheria</taxon>
        <taxon>Euarchontoglires</taxon>
        <taxon>Glires</taxon>
        <taxon>Rodentia</taxon>
        <taxon>Myomorpha</taxon>
        <taxon>Muroidea</taxon>
        <taxon>Muridae</taxon>
        <taxon>Murinae</taxon>
        <taxon>Mus</taxon>
        <taxon>Mus</taxon>
    </lineage>
</organism>
<comment type="function">
    <text evidence="5 9 10 11 12 14 15 16 17 18">Functions in lipid transport from the endoplasmic reticulum and is involved in a wide array of cellular functions probably through regulation of the biogenesis of lipid microdomains at the plasma membrane (PubMed:12730355). Involved in the regulation of different receptors it plays a role in BDNF signaling and EGF signaling. Also regulates ion channels like the potassium channel and could modulate neurotransmitter release. Plays a role in calcium signaling through modulation together with ANK2 of the ITP3R-dependent calcium efflux at the endoplasmic reticulum. Plays a role in several other cell functions including proliferation, survival and death. Originally identified for its ability to bind various psychoactive drugs it is involved in learning processes, memory and mood alteration (PubMed:11149946, PubMed:14622179, PubMed:15571673, PubMed:15777781, PubMed:23332758, PubMed:9425306, PubMed:9603192). Necessary for proper mitochondrial axonal transport in motor neurons, in particular the retrograde movement of mitochondria (PubMed:25678561). Plays a role in protecting cells against oxidative stress-induced cell death via its interaction with RNF112 (PubMed:26792191).</text>
</comment>
<comment type="subunit">
    <text evidence="3 4 5 14 16">Homotrimer (By similarity). Interacts with KCNA4 (By similarity). Interacts with KCNA2; cocaine consumption leads to increased interaction (PubMed:23332758). Forms a ternary complex with ANK2 and ITPR3. The complex is disrupted by agonists (PubMed:11149946). Interacts with RNF112 in an oxidative stress-regulated manner (PubMed:26792191).</text>
</comment>
<comment type="interaction">
    <interactant intactId="EBI-1557700">
        <id>O55242</id>
    </interactant>
    <interactant intactId="EBI-644033">
        <id>P63141</id>
        <label>Kcna2</label>
    </interactant>
    <organismsDiffer>false</organismsDiffer>
    <experiments>3</experiments>
</comment>
<comment type="interaction">
    <interactant intactId="EBI-1557700">
        <id>O55242</id>
    </interactant>
    <interactant intactId="EBI-988311">
        <id>G3I8R9</id>
        <label>HSPA5</label>
    </interactant>
    <organismsDiffer>true</organismsDiffer>
    <experiments>3</experiments>
</comment>
<comment type="subcellular location">
    <subcellularLocation>
        <location evidence="3">Nucleus inner membrane</location>
    </subcellularLocation>
    <subcellularLocation>
        <location evidence="3">Nucleus outer membrane</location>
    </subcellularLocation>
    <subcellularLocation>
        <location evidence="9">Nucleus envelope</location>
    </subcellularLocation>
    <subcellularLocation>
        <location evidence="3">Cytoplasmic vesicle</location>
    </subcellularLocation>
    <subcellularLocation>
        <location evidence="9">Endoplasmic reticulum membrane</location>
    </subcellularLocation>
    <subcellularLocation>
        <location evidence="3">Membrane</location>
        <topology evidence="3">Single-pass membrane protein</topology>
    </subcellularLocation>
    <subcellularLocation>
        <location evidence="9">Lipid droplet</location>
    </subcellularLocation>
    <subcellularLocation>
        <location evidence="3">Cell junction</location>
    </subcellularLocation>
    <subcellularLocation>
        <location evidence="3">Cell membrane</location>
    </subcellularLocation>
    <subcellularLocation>
        <location evidence="3">Cell projection</location>
        <location evidence="3">Growth cone</location>
    </subcellularLocation>
    <subcellularLocation>
        <location evidence="13">Postsynaptic density membrane</location>
    </subcellularLocation>
    <text evidence="3 9 13">During interphase, detected at the inner and outer nuclear membrane and the endoplasmic reticulum. Detected on cytoplasmic vesicles during mitosis (By similarity). Targeted to lipid droplets, cholesterol and galactosylceramide-enriched domains of the endoplasmic reticulum (PubMed:12730355). Enriched at cell-cell communication regions, growth cone and postsynaptic structures. Localization is modulated by ligand-binding. In motor neurons it is enriched at cholinergic postsynaptic densities (PubMed:20167253).</text>
</comment>
<comment type="alternative products">
    <event type="alternative splicing"/>
    <isoform>
        <id>O55242-1</id>
        <name>1</name>
        <sequence type="displayed"/>
    </isoform>
    <isoform>
        <id>O55242-2</id>
        <name>2</name>
        <name>Beta</name>
        <sequence type="described" ref="VSP_021987"/>
    </isoform>
</comment>
<comment type="tissue specificity">
    <text evidence="6 7 8 13 18">Widely expressed with higher expression in liver, brain, kidney and thymus. Expressed throughout the brain with higher expression within cerebral cortex, hippocampus and cerebellum. Within the hippocampus expressed in cornu ammonis pyramidal neurons, the granular cells of the dentate gyrus as well as interneurons. Within the cerebellum, expressed in Purkinje cell bodies (PubMed:11207432, PubMed:11476895, PubMed:11687279, PubMed:9603192). Highly expressed in the brainstem and motor neurons of the spinal cord (PubMed:20167253). Expressed by neural retina, retinal pigment epithelial cells and lens (PubMed:11207432, PubMed:11476895, PubMed:11687279, PubMed:9603192).</text>
</comment>
<comment type="domain">
    <text evidence="3">The C-terminal helices form a flat, hydrophobic surface that is probably tightly associated with the cytosolic surface of the endoplasmic reticulum membrane.</text>
</comment>
<comment type="disruption phenotype">
    <text evidence="10 13 15">Mice display decreased hypermotility response induced by (+)SKF-10047 challenge and reduced formalin-induced pain (PubMed:14622179). Mice display motor coordination defects, muscle weakness, partial neuromuscular junction innervation, and motor neuron degeneration (PubMed:20167253, PubMed:25678561).</text>
</comment>
<comment type="miscellaneous">
    <text>Depletion by RNAi enhances kappa-type opioid receptor-mediated analgesia and prevents the memory-improving effects of (-)- and (+)-pentazocine.</text>
</comment>
<comment type="miscellaneous">
    <text evidence="1">Sigma receptors are classified into two subtypes (Sigma-1 and Sigma-2) based on their different pharmacological profile.</text>
</comment>
<comment type="similarity">
    <text evidence="20">Belongs to the ERG2 family.</text>
</comment>